<gene>
    <name evidence="1" type="primary">rpmD</name>
    <name type="ordered locus">FP1321</name>
</gene>
<protein>
    <recommendedName>
        <fullName evidence="1">Large ribosomal subunit protein uL30</fullName>
    </recommendedName>
    <alternativeName>
        <fullName evidence="2">50S ribosomal protein L30</fullName>
    </alternativeName>
</protein>
<accession>A6GZ81</accession>
<evidence type="ECO:0000255" key="1">
    <source>
        <dbReference type="HAMAP-Rule" id="MF_01371"/>
    </source>
</evidence>
<evidence type="ECO:0000305" key="2"/>
<keyword id="KW-1185">Reference proteome</keyword>
<keyword id="KW-0687">Ribonucleoprotein</keyword>
<keyword id="KW-0689">Ribosomal protein</keyword>
<feature type="chain" id="PRO_1000056040" description="Large ribosomal subunit protein uL30">
    <location>
        <begin position="1"/>
        <end position="60"/>
    </location>
</feature>
<sequence length="60" mass="6693">MAKLLVKQVRSKINCPLDQKRGLEALGLRKMGQVVEHDSNPTILGMINKVKHLVSVEEAK</sequence>
<organism>
    <name type="scientific">Flavobacterium psychrophilum (strain ATCC 49511 / DSM 21280 / CIP 103535 / JIP02/86)</name>
    <dbReference type="NCBI Taxonomy" id="402612"/>
    <lineage>
        <taxon>Bacteria</taxon>
        <taxon>Pseudomonadati</taxon>
        <taxon>Bacteroidota</taxon>
        <taxon>Flavobacteriia</taxon>
        <taxon>Flavobacteriales</taxon>
        <taxon>Flavobacteriaceae</taxon>
        <taxon>Flavobacterium</taxon>
    </lineage>
</organism>
<proteinExistence type="inferred from homology"/>
<reference key="1">
    <citation type="journal article" date="2007" name="Nat. Biotechnol.">
        <title>Complete genome sequence of the fish pathogen Flavobacterium psychrophilum.</title>
        <authorList>
            <person name="Duchaud E."/>
            <person name="Boussaha M."/>
            <person name="Loux V."/>
            <person name="Bernardet J.-F."/>
            <person name="Michel C."/>
            <person name="Kerouault B."/>
            <person name="Mondot S."/>
            <person name="Nicolas P."/>
            <person name="Bossy R."/>
            <person name="Caron C."/>
            <person name="Bessieres P."/>
            <person name="Gibrat J.-F."/>
            <person name="Claverol S."/>
            <person name="Dumetz F."/>
            <person name="Le Henaff M."/>
            <person name="Benmansour A."/>
        </authorList>
    </citation>
    <scope>NUCLEOTIDE SEQUENCE [LARGE SCALE GENOMIC DNA]</scope>
    <source>
        <strain>ATCC 49511 / DSM 21280 / CIP 103535 / JIP02/86</strain>
    </source>
</reference>
<dbReference type="EMBL" id="AM398681">
    <property type="protein sequence ID" value="CAL43404.1"/>
    <property type="molecule type" value="Genomic_DNA"/>
</dbReference>
<dbReference type="RefSeq" id="WP_011963452.1">
    <property type="nucleotide sequence ID" value="NC_009613.3"/>
</dbReference>
<dbReference type="RefSeq" id="YP_001296215.1">
    <property type="nucleotide sequence ID" value="NC_009613.3"/>
</dbReference>
<dbReference type="SMR" id="A6GZ81"/>
<dbReference type="STRING" id="402612.FP1321"/>
<dbReference type="EnsemblBacteria" id="CAL43404">
    <property type="protein sequence ID" value="CAL43404"/>
    <property type="gene ID" value="FP1321"/>
</dbReference>
<dbReference type="GeneID" id="66553224"/>
<dbReference type="KEGG" id="fps:FP1321"/>
<dbReference type="PATRIC" id="fig|402612.5.peg.1338"/>
<dbReference type="eggNOG" id="COG1841">
    <property type="taxonomic scope" value="Bacteria"/>
</dbReference>
<dbReference type="HOGENOM" id="CLU_131047_1_1_10"/>
<dbReference type="OrthoDB" id="9812790at2"/>
<dbReference type="Proteomes" id="UP000006394">
    <property type="component" value="Chromosome"/>
</dbReference>
<dbReference type="GO" id="GO:0022625">
    <property type="term" value="C:cytosolic large ribosomal subunit"/>
    <property type="evidence" value="ECO:0007669"/>
    <property type="project" value="TreeGrafter"/>
</dbReference>
<dbReference type="GO" id="GO:0003735">
    <property type="term" value="F:structural constituent of ribosome"/>
    <property type="evidence" value="ECO:0007669"/>
    <property type="project" value="InterPro"/>
</dbReference>
<dbReference type="GO" id="GO:0006412">
    <property type="term" value="P:translation"/>
    <property type="evidence" value="ECO:0007669"/>
    <property type="project" value="UniProtKB-UniRule"/>
</dbReference>
<dbReference type="CDD" id="cd01658">
    <property type="entry name" value="Ribosomal_L30"/>
    <property type="match status" value="1"/>
</dbReference>
<dbReference type="Gene3D" id="3.30.1390.20">
    <property type="entry name" value="Ribosomal protein L30, ferredoxin-like fold domain"/>
    <property type="match status" value="1"/>
</dbReference>
<dbReference type="HAMAP" id="MF_01371_B">
    <property type="entry name" value="Ribosomal_uL30_B"/>
    <property type="match status" value="1"/>
</dbReference>
<dbReference type="InterPro" id="IPR036919">
    <property type="entry name" value="Ribo_uL30_ferredoxin-like_sf"/>
</dbReference>
<dbReference type="InterPro" id="IPR005996">
    <property type="entry name" value="Ribosomal_uL30_bac-type"/>
</dbReference>
<dbReference type="InterPro" id="IPR016082">
    <property type="entry name" value="Ribosomal_uL30_ferredoxin-like"/>
</dbReference>
<dbReference type="NCBIfam" id="TIGR01308">
    <property type="entry name" value="rpmD_bact"/>
    <property type="match status" value="1"/>
</dbReference>
<dbReference type="PANTHER" id="PTHR15892:SF2">
    <property type="entry name" value="LARGE RIBOSOMAL SUBUNIT PROTEIN UL30M"/>
    <property type="match status" value="1"/>
</dbReference>
<dbReference type="PANTHER" id="PTHR15892">
    <property type="entry name" value="MITOCHONDRIAL RIBOSOMAL PROTEIN L30"/>
    <property type="match status" value="1"/>
</dbReference>
<dbReference type="Pfam" id="PF00327">
    <property type="entry name" value="Ribosomal_L30"/>
    <property type="match status" value="1"/>
</dbReference>
<dbReference type="PIRSF" id="PIRSF002211">
    <property type="entry name" value="Ribosomal_L30_bac-type"/>
    <property type="match status" value="1"/>
</dbReference>
<dbReference type="SUPFAM" id="SSF55129">
    <property type="entry name" value="Ribosomal protein L30p/L7e"/>
    <property type="match status" value="1"/>
</dbReference>
<comment type="subunit">
    <text evidence="1">Part of the 50S ribosomal subunit.</text>
</comment>
<comment type="similarity">
    <text evidence="1">Belongs to the universal ribosomal protein uL30 family.</text>
</comment>
<name>RL30_FLAPJ</name>